<organism>
    <name type="scientific">Rippkaea orientalis (strain PCC 8801 / RF-1)</name>
    <name type="common">Cyanothece sp. (strain PCC 8801)</name>
    <dbReference type="NCBI Taxonomy" id="41431"/>
    <lineage>
        <taxon>Bacteria</taxon>
        <taxon>Bacillati</taxon>
        <taxon>Cyanobacteriota</taxon>
        <taxon>Cyanophyceae</taxon>
        <taxon>Oscillatoriophycideae</taxon>
        <taxon>Chroococcales</taxon>
        <taxon>Aphanothecaceae</taxon>
        <taxon>Rippkaea</taxon>
        <taxon>Rippkaea orientalis</taxon>
    </lineage>
</organism>
<feature type="chain" id="PRO_1000143101" description="Small ribosomal subunit protein uS15">
    <location>
        <begin position="1"/>
        <end position="89"/>
    </location>
</feature>
<protein>
    <recommendedName>
        <fullName evidence="1">Small ribosomal subunit protein uS15</fullName>
    </recommendedName>
    <alternativeName>
        <fullName evidence="2">30S ribosomal protein S15</fullName>
    </alternativeName>
</protein>
<keyword id="KW-1185">Reference proteome</keyword>
<keyword id="KW-0687">Ribonucleoprotein</keyword>
<keyword id="KW-0689">Ribosomal protein</keyword>
<keyword id="KW-0694">RNA-binding</keyword>
<keyword id="KW-0699">rRNA-binding</keyword>
<gene>
    <name evidence="1" type="primary">rpsO</name>
    <name evidence="1" type="synonym">rps15</name>
    <name type="ordered locus">PCC8801_2284</name>
</gene>
<name>RS15_RIPO1</name>
<accession>B7K1A8</accession>
<comment type="function">
    <text evidence="1">One of the primary rRNA binding proteins, it binds directly to 16S rRNA where it helps nucleate assembly of the platform of the 30S subunit by binding and bridging several RNA helices of the 16S rRNA.</text>
</comment>
<comment type="function">
    <text evidence="1">Forms an intersubunit bridge (bridge B4) with the 23S rRNA of the 50S subunit in the ribosome.</text>
</comment>
<comment type="subunit">
    <text evidence="1">Part of the 30S ribosomal subunit. Forms a bridge to the 50S subunit in the 70S ribosome, contacting the 23S rRNA.</text>
</comment>
<comment type="similarity">
    <text evidence="1">Belongs to the universal ribosomal protein uS15 family.</text>
</comment>
<sequence>MSLSATQKQEVITSYQVHETDTGSADLQVALLTTRISQLTGHLQQNPKDHASRRGLLKMIGRRRRLLSYINSKDSQRYQDLIKRLGIRR</sequence>
<dbReference type="EMBL" id="CP001287">
    <property type="protein sequence ID" value="ACK66303.1"/>
    <property type="molecule type" value="Genomic_DNA"/>
</dbReference>
<dbReference type="RefSeq" id="WP_012595571.1">
    <property type="nucleotide sequence ID" value="NC_011726.1"/>
</dbReference>
<dbReference type="SMR" id="B7K1A8"/>
<dbReference type="STRING" id="41431.PCC8801_2284"/>
<dbReference type="KEGG" id="cyp:PCC8801_2284"/>
<dbReference type="eggNOG" id="COG0184">
    <property type="taxonomic scope" value="Bacteria"/>
</dbReference>
<dbReference type="HOGENOM" id="CLU_148518_0_0_3"/>
<dbReference type="OrthoDB" id="9799262at2"/>
<dbReference type="Proteomes" id="UP000008204">
    <property type="component" value="Chromosome"/>
</dbReference>
<dbReference type="GO" id="GO:0022627">
    <property type="term" value="C:cytosolic small ribosomal subunit"/>
    <property type="evidence" value="ECO:0007669"/>
    <property type="project" value="TreeGrafter"/>
</dbReference>
<dbReference type="GO" id="GO:0019843">
    <property type="term" value="F:rRNA binding"/>
    <property type="evidence" value="ECO:0007669"/>
    <property type="project" value="UniProtKB-UniRule"/>
</dbReference>
<dbReference type="GO" id="GO:0003735">
    <property type="term" value="F:structural constituent of ribosome"/>
    <property type="evidence" value="ECO:0007669"/>
    <property type="project" value="InterPro"/>
</dbReference>
<dbReference type="GO" id="GO:0006412">
    <property type="term" value="P:translation"/>
    <property type="evidence" value="ECO:0007669"/>
    <property type="project" value="UniProtKB-UniRule"/>
</dbReference>
<dbReference type="CDD" id="cd00353">
    <property type="entry name" value="Ribosomal_S15p_S13e"/>
    <property type="match status" value="1"/>
</dbReference>
<dbReference type="FunFam" id="1.10.287.10:FF:000002">
    <property type="entry name" value="30S ribosomal protein S15"/>
    <property type="match status" value="1"/>
</dbReference>
<dbReference type="Gene3D" id="6.10.250.3130">
    <property type="match status" value="1"/>
</dbReference>
<dbReference type="Gene3D" id="1.10.287.10">
    <property type="entry name" value="S15/NS1, RNA-binding"/>
    <property type="match status" value="1"/>
</dbReference>
<dbReference type="HAMAP" id="MF_01343_B">
    <property type="entry name" value="Ribosomal_uS15_B"/>
    <property type="match status" value="1"/>
</dbReference>
<dbReference type="InterPro" id="IPR000589">
    <property type="entry name" value="Ribosomal_uS15"/>
</dbReference>
<dbReference type="InterPro" id="IPR005290">
    <property type="entry name" value="Ribosomal_uS15_bac-type"/>
</dbReference>
<dbReference type="InterPro" id="IPR009068">
    <property type="entry name" value="uS15_NS1_RNA-bd_sf"/>
</dbReference>
<dbReference type="NCBIfam" id="TIGR00952">
    <property type="entry name" value="S15_bact"/>
    <property type="match status" value="1"/>
</dbReference>
<dbReference type="PANTHER" id="PTHR23321">
    <property type="entry name" value="RIBOSOMAL PROTEIN S15, BACTERIAL AND ORGANELLAR"/>
    <property type="match status" value="1"/>
</dbReference>
<dbReference type="PANTHER" id="PTHR23321:SF26">
    <property type="entry name" value="SMALL RIBOSOMAL SUBUNIT PROTEIN US15M"/>
    <property type="match status" value="1"/>
</dbReference>
<dbReference type="Pfam" id="PF00312">
    <property type="entry name" value="Ribosomal_S15"/>
    <property type="match status" value="1"/>
</dbReference>
<dbReference type="SMART" id="SM01387">
    <property type="entry name" value="Ribosomal_S15"/>
    <property type="match status" value="1"/>
</dbReference>
<dbReference type="SUPFAM" id="SSF47060">
    <property type="entry name" value="S15/NS1 RNA-binding domain"/>
    <property type="match status" value="1"/>
</dbReference>
<dbReference type="PROSITE" id="PS00362">
    <property type="entry name" value="RIBOSOMAL_S15"/>
    <property type="match status" value="1"/>
</dbReference>
<evidence type="ECO:0000255" key="1">
    <source>
        <dbReference type="HAMAP-Rule" id="MF_01343"/>
    </source>
</evidence>
<evidence type="ECO:0000305" key="2"/>
<proteinExistence type="inferred from homology"/>
<reference key="1">
    <citation type="journal article" date="2011" name="MBio">
        <title>Novel metabolic attributes of the genus Cyanothece, comprising a group of unicellular nitrogen-fixing Cyanobacteria.</title>
        <authorList>
            <person name="Bandyopadhyay A."/>
            <person name="Elvitigala T."/>
            <person name="Welsh E."/>
            <person name="Stockel J."/>
            <person name="Liberton M."/>
            <person name="Min H."/>
            <person name="Sherman L.A."/>
            <person name="Pakrasi H.B."/>
        </authorList>
    </citation>
    <scope>NUCLEOTIDE SEQUENCE [LARGE SCALE GENOMIC DNA]</scope>
    <source>
        <strain>PCC 8801 / RF-1</strain>
    </source>
</reference>